<comment type="function">
    <text evidence="1">Chaperone required for the export of the chitin synthase chs-3 from the endoplasmic reticulum.</text>
</comment>
<comment type="subunit">
    <text evidence="1">Interacts with chs-3.</text>
</comment>
<comment type="subcellular location">
    <subcellularLocation>
        <location evidence="1">Endoplasmic reticulum membrane</location>
        <topology evidence="1">Multi-pass membrane protein</topology>
    </subcellularLocation>
</comment>
<comment type="similarity">
    <text evidence="4">Belongs to the CHS7 family.</text>
</comment>
<dbReference type="EMBL" id="CM002238">
    <property type="protein sequence ID" value="EAA33670.3"/>
    <property type="molecule type" value="Genomic_DNA"/>
</dbReference>
<dbReference type="RefSeq" id="XP_962906.3">
    <property type="nucleotide sequence ID" value="XM_957813.3"/>
</dbReference>
<dbReference type="FunCoup" id="Q7SB92">
    <property type="interactions" value="41"/>
</dbReference>
<dbReference type="STRING" id="367110.Q7SB92"/>
<dbReference type="PaxDb" id="5141-EFNCRP00000007629"/>
<dbReference type="EnsemblFungi" id="EAA33670">
    <property type="protein sequence ID" value="EAA33670"/>
    <property type="gene ID" value="NCU05720"/>
</dbReference>
<dbReference type="GeneID" id="3879045"/>
<dbReference type="KEGG" id="ncr:NCU05720"/>
<dbReference type="VEuPathDB" id="FungiDB:NCU05720"/>
<dbReference type="HOGENOM" id="CLU_050424_1_1_1"/>
<dbReference type="InParanoid" id="Q7SB92"/>
<dbReference type="OrthoDB" id="2189463at2759"/>
<dbReference type="Proteomes" id="UP000001805">
    <property type="component" value="Chromosome 3, Linkage Group III"/>
</dbReference>
<dbReference type="GO" id="GO:0005789">
    <property type="term" value="C:endoplasmic reticulum membrane"/>
    <property type="evidence" value="ECO:0000318"/>
    <property type="project" value="GO_Central"/>
</dbReference>
<dbReference type="GO" id="GO:0051082">
    <property type="term" value="F:unfolded protein binding"/>
    <property type="evidence" value="ECO:0000318"/>
    <property type="project" value="GO_Central"/>
</dbReference>
<dbReference type="GO" id="GO:0071555">
    <property type="term" value="P:cell wall organization"/>
    <property type="evidence" value="ECO:0007669"/>
    <property type="project" value="UniProtKB-KW"/>
</dbReference>
<dbReference type="GO" id="GO:0006031">
    <property type="term" value="P:chitin biosynthetic process"/>
    <property type="evidence" value="ECO:0000318"/>
    <property type="project" value="GO_Central"/>
</dbReference>
<dbReference type="GO" id="GO:0006457">
    <property type="term" value="P:protein folding"/>
    <property type="evidence" value="ECO:0000318"/>
    <property type="project" value="GO_Central"/>
</dbReference>
<dbReference type="GO" id="GO:0015031">
    <property type="term" value="P:protein transport"/>
    <property type="evidence" value="ECO:0007669"/>
    <property type="project" value="UniProtKB-KW"/>
</dbReference>
<dbReference type="InterPro" id="IPR022057">
    <property type="entry name" value="Chs7"/>
</dbReference>
<dbReference type="PANTHER" id="PTHR35329">
    <property type="entry name" value="CHITIN SYNTHASE EXPORT CHAPERONE"/>
    <property type="match status" value="1"/>
</dbReference>
<dbReference type="PANTHER" id="PTHR35329:SF2">
    <property type="entry name" value="CHITIN SYNTHASE EXPORT CHAPERONE"/>
    <property type="match status" value="1"/>
</dbReference>
<dbReference type="Pfam" id="PF12271">
    <property type="entry name" value="Chs7"/>
    <property type="match status" value="1"/>
</dbReference>
<evidence type="ECO:0000250" key="1"/>
<evidence type="ECO:0000255" key="2"/>
<evidence type="ECO:0000256" key="3">
    <source>
        <dbReference type="SAM" id="MobiDB-lite"/>
    </source>
</evidence>
<evidence type="ECO:0000305" key="4"/>
<name>CHS7_NEUCR</name>
<reference key="1">
    <citation type="journal article" date="2003" name="Nature">
        <title>The genome sequence of the filamentous fungus Neurospora crassa.</title>
        <authorList>
            <person name="Galagan J.E."/>
            <person name="Calvo S.E."/>
            <person name="Borkovich K.A."/>
            <person name="Selker E.U."/>
            <person name="Read N.D."/>
            <person name="Jaffe D.B."/>
            <person name="FitzHugh W."/>
            <person name="Ma L.-J."/>
            <person name="Smirnov S."/>
            <person name="Purcell S."/>
            <person name="Rehman B."/>
            <person name="Elkins T."/>
            <person name="Engels R."/>
            <person name="Wang S."/>
            <person name="Nielsen C.B."/>
            <person name="Butler J."/>
            <person name="Endrizzi M."/>
            <person name="Qui D."/>
            <person name="Ianakiev P."/>
            <person name="Bell-Pedersen D."/>
            <person name="Nelson M.A."/>
            <person name="Werner-Washburne M."/>
            <person name="Selitrennikoff C.P."/>
            <person name="Kinsey J.A."/>
            <person name="Braun E.L."/>
            <person name="Zelter A."/>
            <person name="Schulte U."/>
            <person name="Kothe G.O."/>
            <person name="Jedd G."/>
            <person name="Mewes H.-W."/>
            <person name="Staben C."/>
            <person name="Marcotte E."/>
            <person name="Greenberg D."/>
            <person name="Roy A."/>
            <person name="Foley K."/>
            <person name="Naylor J."/>
            <person name="Stange-Thomann N."/>
            <person name="Barrett R."/>
            <person name="Gnerre S."/>
            <person name="Kamal M."/>
            <person name="Kamvysselis M."/>
            <person name="Mauceli E.W."/>
            <person name="Bielke C."/>
            <person name="Rudd S."/>
            <person name="Frishman D."/>
            <person name="Krystofova S."/>
            <person name="Rasmussen C."/>
            <person name="Metzenberg R.L."/>
            <person name="Perkins D.D."/>
            <person name="Kroken S."/>
            <person name="Cogoni C."/>
            <person name="Macino G."/>
            <person name="Catcheside D.E.A."/>
            <person name="Li W."/>
            <person name="Pratt R.J."/>
            <person name="Osmani S.A."/>
            <person name="DeSouza C.P.C."/>
            <person name="Glass N.L."/>
            <person name="Orbach M.J."/>
            <person name="Berglund J.A."/>
            <person name="Voelker R."/>
            <person name="Yarden O."/>
            <person name="Plamann M."/>
            <person name="Seiler S."/>
            <person name="Dunlap J.C."/>
            <person name="Radford A."/>
            <person name="Aramayo R."/>
            <person name="Natvig D.O."/>
            <person name="Alex L.A."/>
            <person name="Mannhaupt G."/>
            <person name="Ebbole D.J."/>
            <person name="Freitag M."/>
            <person name="Paulsen I."/>
            <person name="Sachs M.S."/>
            <person name="Lander E.S."/>
            <person name="Nusbaum C."/>
            <person name="Birren B.W."/>
        </authorList>
    </citation>
    <scope>NUCLEOTIDE SEQUENCE [LARGE SCALE GENOMIC DNA]</scope>
    <source>
        <strain>ATCC 24698 / 74-OR23-1A / CBS 708.71 / DSM 1257 / FGSC 987</strain>
    </source>
</reference>
<gene>
    <name type="primary">csc-1</name>
    <name type="synonym">chs7</name>
    <name type="ORF">NCU05720</name>
</gene>
<keyword id="KW-0961">Cell wall biogenesis/degradation</keyword>
<keyword id="KW-0256">Endoplasmic reticulum</keyword>
<keyword id="KW-0472">Membrane</keyword>
<keyword id="KW-0653">Protein transport</keyword>
<keyword id="KW-1185">Reference proteome</keyword>
<keyword id="KW-0812">Transmembrane</keyword>
<keyword id="KW-1133">Transmembrane helix</keyword>
<keyword id="KW-0813">Transport</keyword>
<feature type="chain" id="PRO_0000280581" description="Chitin synthase export chaperone">
    <location>
        <begin position="1"/>
        <end position="358"/>
    </location>
</feature>
<feature type="transmembrane region" description="Helical" evidence="2">
    <location>
        <begin position="49"/>
        <end position="69"/>
    </location>
</feature>
<feature type="transmembrane region" description="Helical" evidence="2">
    <location>
        <begin position="88"/>
        <end position="108"/>
    </location>
</feature>
<feature type="transmembrane region" description="Helical" evidence="2">
    <location>
        <begin position="117"/>
        <end position="137"/>
    </location>
</feature>
<feature type="transmembrane region" description="Helical" evidence="2">
    <location>
        <begin position="159"/>
        <end position="179"/>
    </location>
</feature>
<feature type="transmembrane region" description="Helical" evidence="2">
    <location>
        <begin position="185"/>
        <end position="205"/>
    </location>
</feature>
<feature type="transmembrane region" description="Helical" evidence="2">
    <location>
        <begin position="220"/>
        <end position="240"/>
    </location>
</feature>
<feature type="transmembrane region" description="Helical" evidence="2">
    <location>
        <begin position="250"/>
        <end position="270"/>
    </location>
</feature>
<feature type="region of interest" description="Disordered" evidence="3">
    <location>
        <begin position="321"/>
        <end position="358"/>
    </location>
</feature>
<feature type="compositionally biased region" description="Polar residues" evidence="3">
    <location>
        <begin position="347"/>
        <end position="358"/>
    </location>
</feature>
<organism>
    <name type="scientific">Neurospora crassa (strain ATCC 24698 / 74-OR23-1A / CBS 708.71 / DSM 1257 / FGSC 987)</name>
    <dbReference type="NCBI Taxonomy" id="367110"/>
    <lineage>
        <taxon>Eukaryota</taxon>
        <taxon>Fungi</taxon>
        <taxon>Dikarya</taxon>
        <taxon>Ascomycota</taxon>
        <taxon>Pezizomycotina</taxon>
        <taxon>Sordariomycetes</taxon>
        <taxon>Sordariomycetidae</taxon>
        <taxon>Sordariales</taxon>
        <taxon>Sordariaceae</taxon>
        <taxon>Neurospora</taxon>
    </lineage>
</organism>
<proteinExistence type="inferred from homology"/>
<protein>
    <recommendedName>
        <fullName>Chitin synthase export chaperone</fullName>
    </recommendedName>
    <alternativeName>
        <fullName>Chitin synthase chaperone 1</fullName>
    </alternativeName>
</protein>
<accession>Q7SB92</accession>
<sequence>MGKFGDFSSICRMAPIPLCASVGPITSIATGVGIEPDCYARNIEVANTIIFQGAASVMHIVALVMTVVMLLHVRGKFTAVGRKEITTFFYLYMILTFLSLCIDAGVIPPHSGSYPYFVAVQAGLASALVTCLVINGFVGFQLYEDGTPLSLWMLRLCSFVAFVISFLVGLATFKSWAGLGPTNTVGIFVVLYFLNALQLLLYVVMQIILVTRTLQDRWPLGDIAFGLFFFIAGQVILYAFSSPICEGISHYLDGLFFATTCNLLAVMMVYKYWDSITKEDLEFSVGTRMNNWEVKELLPQGPEEDRRATVYADPIYEGHYASGPGTGSGASASGYEGGHHRRESHGYTPSPNRQSLRY</sequence>